<feature type="signal peptide">
    <location>
        <begin position="1"/>
        <end position="33"/>
    </location>
</feature>
<feature type="chain" id="PRO_0000017075" description="Laminin subunit gamma-1">
    <location>
        <begin position="34"/>
        <end position="1607"/>
    </location>
</feature>
<feature type="domain" description="Laminin N-terminal" evidence="5">
    <location>
        <begin position="44"/>
        <end position="283"/>
    </location>
</feature>
<feature type="domain" description="Laminin EGF-like 1" evidence="4">
    <location>
        <begin position="284"/>
        <end position="339"/>
    </location>
</feature>
<feature type="domain" description="Laminin EGF-like 2" evidence="4">
    <location>
        <begin position="340"/>
        <end position="395"/>
    </location>
</feature>
<feature type="domain" description="Laminin EGF-like 3" evidence="4">
    <location>
        <begin position="396"/>
        <end position="442"/>
    </location>
</feature>
<feature type="domain" description="Laminin EGF-like 4" evidence="4">
    <location>
        <begin position="443"/>
        <end position="492"/>
    </location>
</feature>
<feature type="domain" description="Laminin EGF-like 5; first part" evidence="4">
    <location>
        <begin position="493"/>
        <end position="502"/>
    </location>
</feature>
<feature type="domain" description="Laminin IV type A" evidence="3">
    <location>
        <begin position="512"/>
        <end position="687"/>
    </location>
</feature>
<feature type="domain" description="Laminin EGF-like 5; second part" evidence="4">
    <location>
        <begin position="688"/>
        <end position="721"/>
    </location>
</feature>
<feature type="domain" description="Laminin EGF-like 6" evidence="4">
    <location>
        <begin position="722"/>
        <end position="770"/>
    </location>
</feature>
<feature type="domain" description="Laminin EGF-like 7" evidence="4">
    <location>
        <begin position="771"/>
        <end position="825"/>
    </location>
</feature>
<feature type="domain" description="Laminin EGF-like 8; nidogen-binding" evidence="4">
    <location>
        <begin position="826"/>
        <end position="881"/>
    </location>
</feature>
<feature type="domain" description="Laminin EGF-like 9" evidence="4">
    <location>
        <begin position="882"/>
        <end position="932"/>
    </location>
</feature>
<feature type="domain" description="Laminin EGF-like 10" evidence="4">
    <location>
        <begin position="933"/>
        <end position="980"/>
    </location>
</feature>
<feature type="domain" description="Laminin EGF-like 11" evidence="4">
    <location>
        <begin position="981"/>
        <end position="1028"/>
    </location>
</feature>
<feature type="region of interest" description="Domain II and I">
    <location>
        <begin position="1029"/>
        <end position="1607"/>
    </location>
</feature>
<feature type="coiled-coil region" evidence="2">
    <location>
        <begin position="1034"/>
        <end position="1594"/>
    </location>
</feature>
<feature type="modified residue" description="Phosphoserine" evidence="1">
    <location>
        <position position="1147"/>
    </location>
</feature>
<feature type="modified residue" description="Phosphoserine" evidence="1">
    <location>
        <position position="1491"/>
    </location>
</feature>
<feature type="glycosylation site" description="N-linked (GlcNAc...) asparagine" evidence="2">
    <location>
        <position position="58"/>
    </location>
</feature>
<feature type="glycosylation site" description="N-linked (GlcNAc...) asparagine" evidence="2">
    <location>
        <position position="132"/>
    </location>
</feature>
<feature type="glycosylation site" description="N-linked (GlcNAc...) asparagine" evidence="2">
    <location>
        <position position="574"/>
    </location>
</feature>
<feature type="glycosylation site" description="N-linked (GlcNAc...) asparagine" evidence="6">
    <location>
        <position position="648"/>
    </location>
</feature>
<feature type="glycosylation site" description="N-linked (GlcNAc...) asparagine" evidence="2">
    <location>
        <position position="1020"/>
    </location>
</feature>
<feature type="glycosylation site" description="N-linked (GlcNAc...) asparagine" evidence="6">
    <location>
        <position position="1105"/>
    </location>
</feature>
<feature type="glycosylation site" description="N-linked (GlcNAc...) asparagine" evidence="2">
    <location>
        <position position="1159"/>
    </location>
</feature>
<feature type="glycosylation site" description="N-linked (GlcNAc...) asparagine" evidence="2">
    <location>
        <position position="1173"/>
    </location>
</feature>
<feature type="glycosylation site" description="N-linked (GlcNAc...) asparagine" evidence="6">
    <location>
        <position position="1203"/>
    </location>
</feature>
<feature type="glycosylation site" description="N-linked (GlcNAc...) asparagine" evidence="6">
    <location>
        <position position="1221"/>
    </location>
</feature>
<feature type="glycosylation site" description="N-linked (GlcNAc...) asparagine" evidence="2">
    <location>
        <position position="1239"/>
    </location>
</feature>
<feature type="glycosylation site" description="N-linked (GlcNAc...) asparagine" evidence="2">
    <location>
        <position position="1378"/>
    </location>
</feature>
<feature type="glycosylation site" description="N-linked (GlcNAc...) asparagine" evidence="6">
    <location>
        <position position="1393"/>
    </location>
</feature>
<feature type="glycosylation site" description="N-linked (GlcNAc...) asparagine" evidence="2">
    <location>
        <position position="1437"/>
    </location>
</feature>
<feature type="disulfide bond" evidence="4">
    <location>
        <begin position="284"/>
        <end position="293"/>
    </location>
</feature>
<feature type="disulfide bond" evidence="4">
    <location>
        <begin position="286"/>
        <end position="303"/>
    </location>
</feature>
<feature type="disulfide bond" evidence="4">
    <location>
        <begin position="305"/>
        <end position="314"/>
    </location>
</feature>
<feature type="disulfide bond" evidence="4">
    <location>
        <begin position="340"/>
        <end position="349"/>
    </location>
</feature>
<feature type="disulfide bond" evidence="4">
    <location>
        <begin position="342"/>
        <end position="365"/>
    </location>
</feature>
<feature type="disulfide bond" evidence="4">
    <location>
        <begin position="368"/>
        <end position="377"/>
    </location>
</feature>
<feature type="disulfide bond" evidence="4">
    <location>
        <begin position="380"/>
        <end position="393"/>
    </location>
</feature>
<feature type="disulfide bond" evidence="4">
    <location>
        <begin position="396"/>
        <end position="408"/>
    </location>
</feature>
<feature type="disulfide bond" evidence="4">
    <location>
        <begin position="398"/>
        <end position="414"/>
    </location>
</feature>
<feature type="disulfide bond" evidence="4">
    <location>
        <begin position="416"/>
        <end position="425"/>
    </location>
</feature>
<feature type="disulfide bond" evidence="4">
    <location>
        <begin position="428"/>
        <end position="440"/>
    </location>
</feature>
<feature type="disulfide bond" evidence="4">
    <location>
        <begin position="443"/>
        <end position="454"/>
    </location>
</feature>
<feature type="disulfide bond" evidence="4">
    <location>
        <begin position="445"/>
        <end position="461"/>
    </location>
</feature>
<feature type="disulfide bond" evidence="4">
    <location>
        <begin position="463"/>
        <end position="472"/>
    </location>
</feature>
<feature type="disulfide bond" evidence="4">
    <location>
        <begin position="475"/>
        <end position="490"/>
    </location>
</feature>
<feature type="disulfide bond" evidence="4">
    <location>
        <begin position="722"/>
        <end position="731"/>
    </location>
</feature>
<feature type="disulfide bond" evidence="4">
    <location>
        <begin position="724"/>
        <end position="738"/>
    </location>
</feature>
<feature type="disulfide bond" evidence="4">
    <location>
        <begin position="740"/>
        <end position="749"/>
    </location>
</feature>
<feature type="disulfide bond" evidence="4">
    <location>
        <begin position="752"/>
        <end position="768"/>
    </location>
</feature>
<feature type="disulfide bond">
    <location>
        <begin position="771"/>
        <end position="779"/>
    </location>
</feature>
<feature type="disulfide bond">
    <location>
        <begin position="773"/>
        <end position="790"/>
    </location>
</feature>
<feature type="disulfide bond">
    <location>
        <begin position="793"/>
        <end position="802"/>
    </location>
</feature>
<feature type="disulfide bond">
    <location>
        <begin position="805"/>
        <end position="823"/>
    </location>
</feature>
<feature type="disulfide bond">
    <location>
        <begin position="826"/>
        <end position="840"/>
    </location>
</feature>
<feature type="disulfide bond">
    <location>
        <begin position="828"/>
        <end position="847"/>
    </location>
</feature>
<feature type="disulfide bond">
    <location>
        <begin position="850"/>
        <end position="859"/>
    </location>
</feature>
<feature type="disulfide bond">
    <location>
        <begin position="862"/>
        <end position="879"/>
    </location>
</feature>
<feature type="disulfide bond">
    <location>
        <begin position="882"/>
        <end position="896"/>
    </location>
</feature>
<feature type="disulfide bond">
    <location>
        <begin position="884"/>
        <end position="903"/>
    </location>
</feature>
<feature type="disulfide bond">
    <location>
        <begin position="905"/>
        <end position="914"/>
    </location>
</feature>
<feature type="disulfide bond">
    <location>
        <begin position="917"/>
        <end position="930"/>
    </location>
</feature>
<feature type="disulfide bond" evidence="4">
    <location>
        <begin position="933"/>
        <end position="945"/>
    </location>
</feature>
<feature type="disulfide bond" evidence="4">
    <location>
        <begin position="935"/>
        <end position="952"/>
    </location>
</feature>
<feature type="disulfide bond" evidence="4">
    <location>
        <begin position="954"/>
        <end position="963"/>
    </location>
</feature>
<feature type="disulfide bond" evidence="4">
    <location>
        <begin position="966"/>
        <end position="978"/>
    </location>
</feature>
<feature type="disulfide bond" evidence="4">
    <location>
        <begin position="981"/>
        <end position="993"/>
    </location>
</feature>
<feature type="disulfide bond" evidence="4">
    <location>
        <begin position="983"/>
        <end position="999"/>
    </location>
</feature>
<feature type="disulfide bond" evidence="4">
    <location>
        <begin position="1001"/>
        <end position="1010"/>
    </location>
</feature>
<feature type="disulfide bond" evidence="4">
    <location>
        <begin position="1013"/>
        <end position="1026"/>
    </location>
</feature>
<feature type="disulfide bond" description="Interchain" evidence="8">
    <location>
        <position position="1029"/>
    </location>
</feature>
<feature type="disulfide bond" description="Interchain" evidence="8">
    <location>
        <position position="1032"/>
    </location>
</feature>
<feature type="disulfide bond" description="Interchain (with beta-1 chain)">
    <location>
        <position position="1598"/>
    </location>
</feature>
<feature type="sequence conflict" description="In Ref. 3; AAA39409." evidence="8" ref="3">
    <original>G</original>
    <variation>A</variation>
    <location>
        <position position="216"/>
    </location>
</feature>
<feature type="sequence conflict" description="In Ref. 2." evidence="8" ref="2">
    <original>E</original>
    <variation>D</variation>
    <location>
        <position position="260"/>
    </location>
</feature>
<feature type="sequence conflict" description="In Ref. 2; AAA39408." evidence="8" ref="2">
    <original>S</original>
    <variation>C</variation>
    <location>
        <position position="337"/>
    </location>
</feature>
<feature type="sequence conflict" description="In Ref. 2; AAA39408." evidence="8" ref="2">
    <original>LR</original>
    <variation>PS</variation>
    <location>
        <begin position="447"/>
        <end position="448"/>
    </location>
</feature>
<feature type="sequence conflict" description="In Ref. 2; AAA39408." evidence="8" ref="2">
    <original>D</original>
    <variation>Y</variation>
    <location>
        <position position="544"/>
    </location>
</feature>
<feature type="sequence conflict" description="In Ref. 2; AAA39408." evidence="8" ref="2">
    <original>T</original>
    <variation>S</variation>
    <location>
        <position position="662"/>
    </location>
</feature>
<feature type="sequence conflict" description="In Ref. 2; AAA39408." evidence="8" ref="2">
    <location>
        <position position="886"/>
    </location>
</feature>
<feature type="sequence conflict" description="In Ref. 2; AAA39408." evidence="8" ref="2">
    <location>
        <position position="1158"/>
    </location>
</feature>
<feature type="sequence conflict" description="In Ref. 2; AAA39408." evidence="8" ref="2">
    <original>V</original>
    <variation>A</variation>
    <location>
        <position position="1434"/>
    </location>
</feature>
<feature type="sequence conflict" description="In Ref. 4; CAA28838." evidence="8" ref="4">
    <original>R</original>
    <variation>K</variation>
    <location>
        <position position="1475"/>
    </location>
</feature>
<feature type="sequence conflict" description="In Ref. 4; CAA28838." evidence="8" ref="4">
    <original>D</original>
    <variation>N</variation>
    <location>
        <position position="1576"/>
    </location>
</feature>
<feature type="turn" evidence="12">
    <location>
        <begin position="55"/>
        <end position="58"/>
    </location>
</feature>
<feature type="strand" evidence="12">
    <location>
        <begin position="62"/>
        <end position="64"/>
    </location>
</feature>
<feature type="strand" evidence="12">
    <location>
        <begin position="72"/>
        <end position="75"/>
    </location>
</feature>
<feature type="strand" evidence="12">
    <location>
        <begin position="87"/>
        <end position="90"/>
    </location>
</feature>
<feature type="strand" evidence="12">
    <location>
        <begin position="92"/>
        <end position="94"/>
    </location>
</feature>
<feature type="turn" evidence="12">
    <location>
        <begin position="95"/>
        <end position="97"/>
    </location>
</feature>
<feature type="helix" evidence="12">
    <location>
        <begin position="101"/>
        <end position="104"/>
    </location>
</feature>
<feature type="strand" evidence="12">
    <location>
        <begin position="110"/>
        <end position="112"/>
    </location>
</feature>
<feature type="helix" evidence="12">
    <location>
        <begin position="121"/>
        <end position="123"/>
    </location>
</feature>
<feature type="strand" evidence="12">
    <location>
        <begin position="126"/>
        <end position="128"/>
    </location>
</feature>
<feature type="strand" evidence="12">
    <location>
        <begin position="131"/>
        <end position="153"/>
    </location>
</feature>
<feature type="strand" evidence="12">
    <location>
        <begin position="156"/>
        <end position="168"/>
    </location>
</feature>
<feature type="strand" evidence="12">
    <location>
        <begin position="171"/>
        <end position="177"/>
    </location>
</feature>
<feature type="helix" evidence="12">
    <location>
        <begin position="180"/>
        <end position="184"/>
    </location>
</feature>
<feature type="strand" evidence="12">
    <location>
        <begin position="202"/>
        <end position="205"/>
    </location>
</feature>
<feature type="strand" evidence="12">
    <location>
        <begin position="212"/>
        <end position="214"/>
    </location>
</feature>
<feature type="strand" evidence="12">
    <location>
        <begin position="216"/>
        <end position="221"/>
    </location>
</feature>
<feature type="turn" evidence="12">
    <location>
        <begin position="222"/>
        <end position="225"/>
    </location>
</feature>
<feature type="helix" evidence="12">
    <location>
        <begin position="229"/>
        <end position="234"/>
    </location>
</feature>
<feature type="helix" evidence="12">
    <location>
        <begin position="236"/>
        <end position="241"/>
    </location>
</feature>
<feature type="strand" evidence="12">
    <location>
        <begin position="243"/>
        <end position="253"/>
    </location>
</feature>
<feature type="helix" evidence="12">
    <location>
        <begin position="259"/>
        <end position="261"/>
    </location>
</feature>
<feature type="helix" evidence="12">
    <location>
        <begin position="265"/>
        <end position="268"/>
    </location>
</feature>
<feature type="strand" evidence="12">
    <location>
        <begin position="274"/>
        <end position="284"/>
    </location>
</feature>
<feature type="strand" evidence="12">
    <location>
        <begin position="293"/>
        <end position="295"/>
    </location>
</feature>
<feature type="strand" evidence="12">
    <location>
        <begin position="301"/>
        <end position="303"/>
    </location>
</feature>
<feature type="strand" evidence="12">
    <location>
        <begin position="309"/>
        <end position="311"/>
    </location>
</feature>
<feature type="helix" evidence="12">
    <location>
        <begin position="342"/>
        <end position="344"/>
    </location>
</feature>
<feature type="strand" evidence="12">
    <location>
        <begin position="349"/>
        <end position="351"/>
    </location>
</feature>
<feature type="helix" evidence="12">
    <location>
        <begin position="353"/>
        <end position="358"/>
    </location>
</feature>
<feature type="strand" evidence="12">
    <location>
        <begin position="363"/>
        <end position="365"/>
    </location>
</feature>
<feature type="turn" evidence="12">
    <location>
        <begin position="369"/>
        <end position="371"/>
    </location>
</feature>
<feature type="strand" evidence="12">
    <location>
        <begin position="372"/>
        <end position="374"/>
    </location>
</feature>
<feature type="strand" evidence="12">
    <location>
        <begin position="382"/>
        <end position="385"/>
    </location>
</feature>
<feature type="strand" evidence="9">
    <location>
        <begin position="779"/>
        <end position="781"/>
    </location>
</feature>
<feature type="strand" evidence="9">
    <location>
        <begin position="783"/>
        <end position="785"/>
    </location>
</feature>
<feature type="strand" evidence="9">
    <location>
        <begin position="788"/>
        <end position="790"/>
    </location>
</feature>
<feature type="strand" evidence="9">
    <location>
        <begin position="797"/>
        <end position="799"/>
    </location>
</feature>
<feature type="strand" evidence="9">
    <location>
        <begin position="809"/>
        <end position="812"/>
    </location>
</feature>
<feature type="strand" evidence="10">
    <location>
        <begin position="816"/>
        <end position="819"/>
    </location>
</feature>
<feature type="strand" evidence="9">
    <location>
        <begin position="821"/>
        <end position="825"/>
    </location>
</feature>
<feature type="strand" evidence="11">
    <location>
        <begin position="834"/>
        <end position="837"/>
    </location>
</feature>
<feature type="turn" evidence="9">
    <location>
        <begin position="842"/>
        <end position="844"/>
    </location>
</feature>
<feature type="strand" evidence="11">
    <location>
        <begin position="846"/>
        <end position="849"/>
    </location>
</feature>
<feature type="turn" evidence="9">
    <location>
        <begin position="856"/>
        <end position="859"/>
    </location>
</feature>
<feature type="strand" evidence="9">
    <location>
        <begin position="866"/>
        <end position="868"/>
    </location>
</feature>
<feature type="helix" evidence="9">
    <location>
        <begin position="875"/>
        <end position="877"/>
    </location>
</feature>
<feature type="strand" evidence="9">
    <location>
        <begin position="878"/>
        <end position="881"/>
    </location>
</feature>
<feature type="turn" evidence="9">
    <location>
        <begin position="886"/>
        <end position="888"/>
    </location>
</feature>
<feature type="helix" evidence="9">
    <location>
        <begin position="890"/>
        <end position="892"/>
    </location>
</feature>
<feature type="turn" evidence="9">
    <location>
        <begin position="898"/>
        <end position="900"/>
    </location>
</feature>
<feature type="strand" evidence="9">
    <location>
        <begin position="909"/>
        <end position="911"/>
    </location>
</feature>
<feature type="helix" evidence="9">
    <location>
        <begin position="924"/>
        <end position="926"/>
    </location>
</feature>
<feature type="helix" evidence="13">
    <location>
        <begin position="1555"/>
        <end position="1593"/>
    </location>
</feature>
<accession>P02468</accession>
<evidence type="ECO:0000250" key="1">
    <source>
        <dbReference type="UniProtKB" id="P11047"/>
    </source>
</evidence>
<evidence type="ECO:0000255" key="2"/>
<evidence type="ECO:0000255" key="3">
    <source>
        <dbReference type="PROSITE-ProRule" id="PRU00458"/>
    </source>
</evidence>
<evidence type="ECO:0000255" key="4">
    <source>
        <dbReference type="PROSITE-ProRule" id="PRU00460"/>
    </source>
</evidence>
<evidence type="ECO:0000255" key="5">
    <source>
        <dbReference type="PROSITE-ProRule" id="PRU00466"/>
    </source>
</evidence>
<evidence type="ECO:0000269" key="6">
    <source>
    </source>
</evidence>
<evidence type="ECO:0000269" key="7">
    <source>
    </source>
</evidence>
<evidence type="ECO:0000305" key="8"/>
<evidence type="ECO:0007829" key="9">
    <source>
        <dbReference type="PDB" id="1KLO"/>
    </source>
</evidence>
<evidence type="ECO:0007829" key="10">
    <source>
        <dbReference type="PDB" id="1NPE"/>
    </source>
</evidence>
<evidence type="ECO:0007829" key="11">
    <source>
        <dbReference type="PDB" id="1TLE"/>
    </source>
</evidence>
<evidence type="ECO:0007829" key="12">
    <source>
        <dbReference type="PDB" id="4AQT"/>
    </source>
</evidence>
<evidence type="ECO:0007829" key="13">
    <source>
        <dbReference type="PDB" id="5MC9"/>
    </source>
</evidence>
<sequence length="1607" mass="177298">MTGGGRAALALQPRGRLWPLLAVLAAVAGCVRAAMDECADEGGRPQRCMPEFVNAAFNVTVVATNTCGTPPEEYCVQTGVTGVTKSCHLCDAGQQHLQHGAAFLTDYNNQADTTWWQSQTMLAGVQYPNSINLTLHLGKAFDITYVRLKFHTSRPESFAIYKRTREDGPWIPYQYYSGSCENTYSKANRGFIRTGGDEQQALCTDEFSDISPLTGGNVAFSTLEGRPSAYNFDNSPVLQEWVTATDIRVTLNRLNTFGDEVFNEPKVLKSYYYAISDFAVGGRCKCNGHASECVKNEFDKLMCNCKHNTYGVDCEKCLPFFNDRPWRRATAESASESLPCDCNGRSQECYFDPELYRSTGHGGHCTNCRDNTDGAKCERCRENFFRLGNTEACSPCHCSPVGSLSTQCDSYGRCSCKPGVMGDKCDRCQPGFHSLTEAGCRPCSCDLRGSTDECNVETGRCVCKDNVEGFNCERCKPGFFNLESSNPKGCTPCFCFGHSSVCTNAVGYSVYDISSTFQIDEDGWRVEQRDGSEASLEWSSDRQDIAVISDSYFPRYFIAPVKFLGNQVLSYGQNLSFSFRVDRRDTRLSAEDLVLEGAGLRVSVPLIAQGNSYPSETTVKYIFRLHEATDYPWRPALSPFEFQKLLNNLTSIKIRGTYSERTAGYLDDVTLQSARPGPGVPATWVESCTCPVGYGGQFCETCLPGYRRETPSLGPYSPCVLCTCNGHSETCDPETGVCDCRDNTAGPHCEKCSDGYYGDSTLGTSSDCQPCPCPGGSSCAIVPKTKEVVCTHCPTGTAGKRCELCDDGYFGDPLGSNGPVRLCRPCQCNDNIDPNAVGNCNRLTGECLKCIYNTAGFYCDRCKEGFFGNPLAPNPADKCKACACNPYGTVQQQSSCNPVTGQCQCLPHVSGRDCGTCDPGYYNLQSGQGCERCDCHALGSTNGQCDIRTGQCECQPGITGQHCERCETNHFGFGPEGCKPCDCHHEGSLSLQCKDDGRCECREGFVGNRCDQCEENYFYNRSWPGCQECPACYRLVKDKAAEHRVKLQELESLIANLGTGDDMVTDQAFEDRLKEAEREVTDLLREAQEVKDVDQNLMDRLQRVNSSLHSQISRLQNIRNTIEETGILAERARSRVESTEQLIEIASRELEKAKMAAANVSITQPESTGEPNNMTLLAEEARRLAERHKQEADDIVRVAKTANETSAEAYNLLLRTLAGENQTALEIEELNRKYEQAKNISQDLEKQAARVHEEAKRAGDKAVEIYASVAQLTPVDSEALENEANKIKKEAADLDRLIDQKLKDYEDLREDMRGKEHEVKNLLEKGKAEQQTADQLLARADAAKALAEEAAKKGRSTLQEANDILNNLKDFDRRVNDNKTAAEEALRRIPAINRTIAEANEKTREAQLALGNAAADATEAKNKAHEAERIASAVQKNATSTKADAERTFGEVTDLDNEVNGMLRQLEEAENELKRKQDDADQDMMMAGMASQAAQEAELNARKAKNSVSSLLSQLNNLLDQLGQLDTVDLNKLNEIEGSLNKAKDEMKASDLDRKVSDLESEARKQEAAIMDYNRDIAEIIKDIHNLEDIKKTLPTGCFNTPSIEKP</sequence>
<comment type="function">
    <text>Binding to cells via a high affinity receptor, laminin is thought to mediate the attachment, migration and organization of cells into tissues during embryonic development by interacting with other extracellular matrix components.</text>
</comment>
<comment type="subunit">
    <text evidence="7">Laminin is a complex glycoprotein, consisting of three different polypeptide chains (alpha, beta, gamma), which are bound to each other by disulfide bonds into a cross-shaped molecule comprising one long and three short arms with globules at each end. Gamma-1 is a subunit of laminin-1 (laminin-111 or EHS laminin), laminin-2 (laminin-211 or merosin), laminin-3 (laminin-121 or S-laminin), laminin-4 (laminin-221 or S-merosin), laminin-6 (laminin-311 or K-laminin), laminin-7 (laminin-321 or KS-laminin), laminin-8 (laminin-411), laminin-9 (laminin-421), laminin-10 (laminin-511) and laminin-11 (laminin-521). Interacts with SVEP1 (PubMed:36792666).</text>
</comment>
<comment type="interaction">
    <interactant intactId="EBI-7059830">
        <id>P02468</id>
    </interactant>
    <interactant intactId="EBI-6662997">
        <id>P02469</id>
        <label>Lamb1</label>
    </interactant>
    <organismsDiffer>false</organismsDiffer>
    <experiments>4</experiments>
</comment>
<comment type="interaction">
    <interactant intactId="EBI-7059830">
        <id>P02468</id>
    </interactant>
    <interactant intactId="EBI-1032117">
        <id>P10493</id>
        <label>Nid1</label>
    </interactant>
    <organismsDiffer>false</organismsDiffer>
    <experiments>5</experiments>
</comment>
<comment type="interaction">
    <interactant intactId="EBI-7059830">
        <id>P02468</id>
    </interactant>
    <interactant intactId="EBI-15755373">
        <id>Q9JI33</id>
        <label>Ntn4</label>
    </interactant>
    <organismsDiffer>false</organismsDiffer>
    <experiments>2</experiments>
</comment>
<comment type="subcellular location">
    <subcellularLocation>
        <location>Secreted</location>
        <location>Extracellular space</location>
        <location>Extracellular matrix</location>
        <location>Basement membrane</location>
    </subcellularLocation>
</comment>
<comment type="tissue specificity">
    <text>Found in the basement membranes (major component).</text>
</comment>
<comment type="domain">
    <text>The alpha-helical domains I and II are thought to interact with other laminin chains to form a coiled coil structure.</text>
</comment>
<comment type="domain">
    <text>Domains VI and IV are globular.</text>
</comment>
<proteinExistence type="evidence at protein level"/>
<gene>
    <name type="primary">Lamc1</name>
    <name type="synonym">Lamb-2</name>
    <name type="synonym">Lamc-1</name>
</gene>
<keyword id="KW-0002">3D-structure</keyword>
<keyword id="KW-0084">Basement membrane</keyword>
<keyword id="KW-0130">Cell adhesion</keyword>
<keyword id="KW-0175">Coiled coil</keyword>
<keyword id="KW-1015">Disulfide bond</keyword>
<keyword id="KW-0272">Extracellular matrix</keyword>
<keyword id="KW-0325">Glycoprotein</keyword>
<keyword id="KW-0424">Laminin EGF-like domain</keyword>
<keyword id="KW-0597">Phosphoprotein</keyword>
<keyword id="KW-1185">Reference proteome</keyword>
<keyword id="KW-0677">Repeat</keyword>
<keyword id="KW-0964">Secreted</keyword>
<keyword id="KW-0732">Signal</keyword>
<organism>
    <name type="scientific">Mus musculus</name>
    <name type="common">Mouse</name>
    <dbReference type="NCBI Taxonomy" id="10090"/>
    <lineage>
        <taxon>Eukaryota</taxon>
        <taxon>Metazoa</taxon>
        <taxon>Chordata</taxon>
        <taxon>Craniata</taxon>
        <taxon>Vertebrata</taxon>
        <taxon>Euteleostomi</taxon>
        <taxon>Mammalia</taxon>
        <taxon>Eutheria</taxon>
        <taxon>Euarchontoglires</taxon>
        <taxon>Glires</taxon>
        <taxon>Rodentia</taxon>
        <taxon>Myomorpha</taxon>
        <taxon>Muroidea</taxon>
        <taxon>Muridae</taxon>
        <taxon>Murinae</taxon>
        <taxon>Mus</taxon>
        <taxon>Mus</taxon>
    </lineage>
</organism>
<reference key="1">
    <citation type="journal article" date="1987" name="J. Biol. Chem.">
        <title>The laminin B2 chain has a multidomain structure homologous to the B1 chain.</title>
        <authorList>
            <person name="Sasaki M."/>
            <person name="Yamada Y."/>
        </authorList>
    </citation>
    <scope>NUCLEOTIDE SEQUENCE [MRNA]</scope>
</reference>
<reference key="2">
    <citation type="journal article" date="1988" name="Biochemistry">
        <title>Primary structure of the mouse laminin B2 chain and comparison with laminin B1.</title>
        <authorList>
            <person name="Durkin M.E."/>
            <person name="Bartos B.B."/>
            <person name="Liu S.-H."/>
            <person name="Phillips S.L."/>
            <person name="Chung A.E."/>
        </authorList>
    </citation>
    <scope>NUCLEOTIDE SEQUENCE [MRNA]</scope>
</reference>
<reference key="3">
    <citation type="journal article" date="1988" name="J. Biol. Chem.">
        <title>The laminin B2 chain promoter contains unique repeat sequences and is active in transient transfection.</title>
        <authorList>
            <person name="Ogawa K."/>
            <person name="Burbelo P.D."/>
            <person name="Sasaki M."/>
            <person name="Yamada Y."/>
        </authorList>
    </citation>
    <scope>NUCLEOTIDE SEQUENCE [GENOMIC DNA] OF 1-239</scope>
</reference>
<reference key="4">
    <citation type="journal article" date="1984" name="EMBO J.">
        <title>Sequencing of laminin B chain cDNAs reveals C-terminal regions of coiled-coil alpha-helix.</title>
        <authorList>
            <person name="Barlow D.P."/>
            <person name="Green N.M."/>
            <person name="Kurkinen M."/>
            <person name="Hogan B.L.M."/>
        </authorList>
    </citation>
    <scope>NUCLEOTIDE SEQUENCE [MRNA] OF 1391-1607</scope>
</reference>
<reference key="5">
    <citation type="journal article" date="2009" name="Nat. Biotechnol.">
        <title>Mass-spectrometric identification and relative quantification of N-linked cell surface glycoproteins.</title>
        <authorList>
            <person name="Wollscheid B."/>
            <person name="Bausch-Fluck D."/>
            <person name="Henderson C."/>
            <person name="O'Brien R."/>
            <person name="Bibel M."/>
            <person name="Schiess R."/>
            <person name="Aebersold R."/>
            <person name="Watts J.D."/>
        </authorList>
    </citation>
    <scope>GLYCOSYLATION [LARGE SCALE ANALYSIS] AT ASN-648; ASN-1105; ASN-1203; ASN-1221 AND ASN-1393</scope>
</reference>
<reference key="6">
    <citation type="journal article" date="2010" name="Cell">
        <title>A tissue-specific atlas of mouse protein phosphorylation and expression.</title>
        <authorList>
            <person name="Huttlin E.L."/>
            <person name="Jedrychowski M.P."/>
            <person name="Elias J.E."/>
            <person name="Goswami T."/>
            <person name="Rad R."/>
            <person name="Beausoleil S.A."/>
            <person name="Villen J."/>
            <person name="Haas W."/>
            <person name="Sowa M.E."/>
            <person name="Gygi S.P."/>
        </authorList>
    </citation>
    <scope>IDENTIFICATION BY MASS SPECTROMETRY [LARGE SCALE ANALYSIS]</scope>
    <source>
        <tissue>Brain</tissue>
        <tissue>Brown adipose tissue</tissue>
        <tissue>Heart</tissue>
        <tissue>Kidney</tissue>
        <tissue>Liver</tissue>
        <tissue>Lung</tissue>
        <tissue>Pancreas</tissue>
        <tissue>Spleen</tissue>
        <tissue>Testis</tissue>
    </source>
</reference>
<reference key="7">
    <citation type="journal article" date="2023" name="Nat. Commun.">
        <title>SVEP1 is an endogenous ligand for the orphan receptor PEAR1.</title>
        <authorList>
            <person name="Elenbaas J.S."/>
            <person name="Pudupakkam U."/>
            <person name="Ashworth K.J."/>
            <person name="Kang C.J."/>
            <person name="Patel V."/>
            <person name="Santana K."/>
            <person name="Jung I.H."/>
            <person name="Lee P.C."/>
            <person name="Burks K.H."/>
            <person name="Amrute J.M."/>
            <person name="Mecham R.P."/>
            <person name="Halabi C.M."/>
            <person name="Alisio A."/>
            <person name="Di Paola J."/>
            <person name="Stitziel N.O."/>
        </authorList>
    </citation>
    <scope>INTERACTION WITH SVEP1</scope>
</reference>
<reference key="8">
    <citation type="journal article" date="1996" name="J. Mol. Biol.">
        <title>Crystal structure of three consecutive laminin-type epidermal growth factor-like (LE) modules of laminin gamma1 chain harboring the nidogen binding site.</title>
        <authorList>
            <person name="Stetefeld J."/>
            <person name="Mayer U."/>
            <person name="Timpl R."/>
            <person name="Huber R."/>
        </authorList>
    </citation>
    <scope>X-RAY CRYSTALLOGRAPHY (2.1 ANGSTROMS) OF 771-932</scope>
</reference>
<reference key="9">
    <citation type="journal article" date="1996" name="J. Mol. Biol.">
        <title>Structure of the nidogen binding LE module of the laminin gamma1 chain in solution.</title>
        <authorList>
            <person name="Baumgartner R."/>
            <person name="Czisch M."/>
            <person name="Mayer U."/>
            <person name="Poeschl E."/>
            <person name="Huber R."/>
            <person name="Timpl R."/>
            <person name="Holak T.A."/>
        </authorList>
    </citation>
    <scope>STRUCTURE BY NMR OF 824-881</scope>
</reference>
<protein>
    <recommendedName>
        <fullName>Laminin subunit gamma-1</fullName>
    </recommendedName>
    <alternativeName>
        <fullName>Laminin B2 chain</fullName>
    </alternativeName>
    <alternativeName>
        <fullName>Laminin-1 subunit gamma</fullName>
    </alternativeName>
    <alternativeName>
        <fullName>Laminin-10 subunit gamma</fullName>
    </alternativeName>
    <alternativeName>
        <fullName>Laminin-11 subunit gamma</fullName>
    </alternativeName>
    <alternativeName>
        <fullName>Laminin-2 subunit gamma</fullName>
    </alternativeName>
    <alternativeName>
        <fullName>Laminin-3 subunit gamma</fullName>
    </alternativeName>
    <alternativeName>
        <fullName>Laminin-4 subunit gamma</fullName>
    </alternativeName>
    <alternativeName>
        <fullName>Laminin-6 subunit gamma</fullName>
    </alternativeName>
    <alternativeName>
        <fullName>Laminin-7 subunit gamma</fullName>
    </alternativeName>
    <alternativeName>
        <fullName>Laminin-8 subunit gamma</fullName>
    </alternativeName>
    <alternativeName>
        <fullName>Laminin-9 subunit gamma</fullName>
    </alternativeName>
    <alternativeName>
        <fullName>S-laminin subunit gamma</fullName>
        <shortName>S-LAM gamma</shortName>
    </alternativeName>
</protein>
<dbReference type="EMBL" id="X05211">
    <property type="protein sequence ID" value="CAA28838.1"/>
    <property type="molecule type" value="mRNA"/>
</dbReference>
<dbReference type="EMBL" id="J03484">
    <property type="protein sequence ID" value="AAA39405.1"/>
    <property type="molecule type" value="mRNA"/>
</dbReference>
<dbReference type="EMBL" id="J02930">
    <property type="protein sequence ID" value="AAA39408.1"/>
    <property type="molecule type" value="mRNA"/>
</dbReference>
<dbReference type="EMBL" id="J03749">
    <property type="protein sequence ID" value="AAA39409.1"/>
    <property type="molecule type" value="Genomic_DNA"/>
</dbReference>
<dbReference type="CCDS" id="CCDS15370.1"/>
<dbReference type="PIR" id="A28469">
    <property type="entry name" value="MMMSB2"/>
</dbReference>
<dbReference type="PIR" id="S55783">
    <property type="entry name" value="S55783"/>
</dbReference>
<dbReference type="PDB" id="1KLO">
    <property type="method" value="X-ray"/>
    <property type="resolution" value="2.10 A"/>
    <property type="chains" value="A=771-932"/>
</dbReference>
<dbReference type="PDB" id="1NPE">
    <property type="method" value="X-ray"/>
    <property type="resolution" value="2.30 A"/>
    <property type="chains" value="B=769-932"/>
</dbReference>
<dbReference type="PDB" id="1TLE">
    <property type="method" value="NMR"/>
    <property type="chains" value="A=824-881"/>
</dbReference>
<dbReference type="PDB" id="4AQT">
    <property type="method" value="X-ray"/>
    <property type="resolution" value="3.20 A"/>
    <property type="chains" value="A=33-395"/>
</dbReference>
<dbReference type="PDB" id="5MC9">
    <property type="method" value="X-ray"/>
    <property type="resolution" value="2.13 A"/>
    <property type="chains" value="C=1548-1607"/>
</dbReference>
<dbReference type="PDBsum" id="1KLO"/>
<dbReference type="PDBsum" id="1NPE"/>
<dbReference type="PDBsum" id="1TLE"/>
<dbReference type="PDBsum" id="4AQT"/>
<dbReference type="PDBsum" id="5MC9"/>
<dbReference type="SMR" id="P02468"/>
<dbReference type="ComplexPortal" id="CPX-3008">
    <property type="entry name" value="Laminin-111 complex"/>
</dbReference>
<dbReference type="ComplexPortal" id="CPX-3009">
    <property type="entry name" value="Laminin-211 complex"/>
</dbReference>
<dbReference type="ComplexPortal" id="CPX-3010">
    <property type="entry name" value="Laminin-121 complex"/>
</dbReference>
<dbReference type="ComplexPortal" id="CPX-3011">
    <property type="entry name" value="Laminin-221 complex"/>
</dbReference>
<dbReference type="ComplexPortal" id="CPX-3013">
    <property type="entry name" value="Laminin-311 complex variant A"/>
</dbReference>
<dbReference type="ComplexPortal" id="CPX-3014">
    <property type="entry name" value="Laminin-321 complex"/>
</dbReference>
<dbReference type="ComplexPortal" id="CPX-3015">
    <property type="entry name" value="Laminin-411 complex"/>
</dbReference>
<dbReference type="ComplexPortal" id="CPX-3016">
    <property type="entry name" value="Laminin-511 complex"/>
</dbReference>
<dbReference type="ComplexPortal" id="CPX-3017">
    <property type="entry name" value="Laminin-521 complex"/>
</dbReference>
<dbReference type="ComplexPortal" id="CPX-3031">
    <property type="entry name" value="Laminin-421 complex"/>
</dbReference>
<dbReference type="ComplexPortal" id="CPX-3167">
    <property type="entry name" value="Laminin-311 complex variant B"/>
</dbReference>
<dbReference type="DIP" id="DIP-41793N"/>
<dbReference type="FunCoup" id="P02468">
    <property type="interactions" value="437"/>
</dbReference>
<dbReference type="IntAct" id="P02468">
    <property type="interactions" value="11"/>
</dbReference>
<dbReference type="MINT" id="P02468"/>
<dbReference type="STRING" id="10090.ENSMUSP00000027752"/>
<dbReference type="GlyConnect" id="2461">
    <property type="glycosylation" value="22 N-Linked glycans (10 sites)"/>
</dbReference>
<dbReference type="GlyCosmos" id="P02468">
    <property type="glycosylation" value="14 sites, 26 glycans"/>
</dbReference>
<dbReference type="GlyGen" id="P02468">
    <property type="glycosylation" value="17 sites, 38 N-linked glycans (12 sites), 1 O-linked glycan (3 sites)"/>
</dbReference>
<dbReference type="iPTMnet" id="P02468"/>
<dbReference type="PhosphoSitePlus" id="P02468"/>
<dbReference type="SwissPalm" id="P02468"/>
<dbReference type="jPOST" id="P02468"/>
<dbReference type="PaxDb" id="10090-ENSMUSP00000027752"/>
<dbReference type="PeptideAtlas" id="P02468"/>
<dbReference type="ProteomicsDB" id="265036"/>
<dbReference type="Pumba" id="P02468"/>
<dbReference type="AGR" id="MGI:99914"/>
<dbReference type="MGI" id="MGI:99914">
    <property type="gene designation" value="Lamc1"/>
</dbReference>
<dbReference type="eggNOG" id="KOG1836">
    <property type="taxonomic scope" value="Eukaryota"/>
</dbReference>
<dbReference type="InParanoid" id="P02468"/>
<dbReference type="PhylomeDB" id="P02468"/>
<dbReference type="ChiTaRS" id="Lamc1">
    <property type="organism name" value="mouse"/>
</dbReference>
<dbReference type="EvolutionaryTrace" id="P02468"/>
<dbReference type="PRO" id="PR:P02468"/>
<dbReference type="Proteomes" id="UP000000589">
    <property type="component" value="Unplaced"/>
</dbReference>
<dbReference type="RNAct" id="P02468">
    <property type="molecule type" value="protein"/>
</dbReference>
<dbReference type="GO" id="GO:0005604">
    <property type="term" value="C:basement membrane"/>
    <property type="evidence" value="ECO:0000314"/>
    <property type="project" value="MGI"/>
</dbReference>
<dbReference type="GO" id="GO:0062023">
    <property type="term" value="C:collagen-containing extracellular matrix"/>
    <property type="evidence" value="ECO:0007005"/>
    <property type="project" value="BHF-UCL"/>
</dbReference>
<dbReference type="GO" id="GO:0005576">
    <property type="term" value="C:extracellular region"/>
    <property type="evidence" value="ECO:0000304"/>
    <property type="project" value="Reactome"/>
</dbReference>
<dbReference type="GO" id="GO:0043259">
    <property type="term" value="C:laminin-10 complex"/>
    <property type="evidence" value="ECO:0000353"/>
    <property type="project" value="MGI"/>
</dbReference>
<dbReference type="GO" id="GO:0031594">
    <property type="term" value="C:neuromuscular junction"/>
    <property type="evidence" value="ECO:0000314"/>
    <property type="project" value="SynGO"/>
</dbReference>
<dbReference type="GO" id="GO:0098637">
    <property type="term" value="C:protein complex involved in cell-matrix adhesion"/>
    <property type="evidence" value="ECO:0000303"/>
    <property type="project" value="ComplexPortal"/>
</dbReference>
<dbReference type="GO" id="GO:0043083">
    <property type="term" value="C:synaptic cleft"/>
    <property type="evidence" value="ECO:0000314"/>
    <property type="project" value="SynGO"/>
</dbReference>
<dbReference type="GO" id="GO:0005201">
    <property type="term" value="F:extracellular matrix structural constituent"/>
    <property type="evidence" value="ECO:0000250"/>
    <property type="project" value="HGNC-UCL"/>
</dbReference>
<dbReference type="GO" id="GO:0043208">
    <property type="term" value="F:glycosphingolipid binding"/>
    <property type="evidence" value="ECO:0000314"/>
    <property type="project" value="MGI"/>
</dbReference>
<dbReference type="GO" id="GO:0007155">
    <property type="term" value="P:cell adhesion"/>
    <property type="evidence" value="ECO:0000250"/>
    <property type="project" value="HGNC-UCL"/>
</dbReference>
<dbReference type="GO" id="GO:0016477">
    <property type="term" value="P:cell migration"/>
    <property type="evidence" value="ECO:0000250"/>
    <property type="project" value="HGNC-UCL"/>
</dbReference>
<dbReference type="GO" id="GO:0006325">
    <property type="term" value="P:chromatin organization"/>
    <property type="evidence" value="ECO:0000315"/>
    <property type="project" value="MGI"/>
</dbReference>
<dbReference type="GO" id="GO:0022617">
    <property type="term" value="P:extracellular matrix disassembly"/>
    <property type="evidence" value="ECO:0000250"/>
    <property type="project" value="HGNC-UCL"/>
</dbReference>
<dbReference type="GO" id="GO:0010467">
    <property type="term" value="P:gene expression"/>
    <property type="evidence" value="ECO:0000315"/>
    <property type="project" value="MGI"/>
</dbReference>
<dbReference type="GO" id="GO:0035315">
    <property type="term" value="P:hair cell differentiation"/>
    <property type="evidence" value="ECO:0000315"/>
    <property type="project" value="MGI"/>
</dbReference>
<dbReference type="GO" id="GO:0071335">
    <property type="term" value="P:hair follicle cell proliferation"/>
    <property type="evidence" value="ECO:0000315"/>
    <property type="project" value="MGI"/>
</dbReference>
<dbReference type="GO" id="GO:0031069">
    <property type="term" value="P:hair follicle morphogenesis"/>
    <property type="evidence" value="ECO:0000315"/>
    <property type="project" value="MGI"/>
</dbReference>
<dbReference type="GO" id="GO:0031581">
    <property type="term" value="P:hemidesmosome assembly"/>
    <property type="evidence" value="ECO:0000250"/>
    <property type="project" value="HGNC-UCL"/>
</dbReference>
<dbReference type="GO" id="GO:0031175">
    <property type="term" value="P:neuron projection development"/>
    <property type="evidence" value="ECO:0000314"/>
    <property type="project" value="MGI"/>
</dbReference>
<dbReference type="GO" id="GO:0045785">
    <property type="term" value="P:positive regulation of cell adhesion"/>
    <property type="evidence" value="ECO:0000303"/>
    <property type="project" value="ComplexPortal"/>
</dbReference>
<dbReference type="GO" id="GO:2001046">
    <property type="term" value="P:positive regulation of integrin-mediated signaling pathway"/>
    <property type="evidence" value="ECO:0000303"/>
    <property type="project" value="ComplexPortal"/>
</dbReference>
<dbReference type="GO" id="GO:0051149">
    <property type="term" value="P:positive regulation of muscle cell differentiation"/>
    <property type="evidence" value="ECO:0000303"/>
    <property type="project" value="ComplexPortal"/>
</dbReference>
<dbReference type="GO" id="GO:0065003">
    <property type="term" value="P:protein-containing complex assembly"/>
    <property type="evidence" value="ECO:0000250"/>
    <property type="project" value="HGNC-UCL"/>
</dbReference>
<dbReference type="GO" id="GO:0110011">
    <property type="term" value="P:regulation of basement membrane organization"/>
    <property type="evidence" value="ECO:0000303"/>
    <property type="project" value="ComplexPortal"/>
</dbReference>
<dbReference type="GO" id="GO:0048729">
    <property type="term" value="P:tissue morphogenesis"/>
    <property type="evidence" value="ECO:0000315"/>
    <property type="project" value="MGI"/>
</dbReference>
<dbReference type="CDD" id="cd00055">
    <property type="entry name" value="EGF_Lam"/>
    <property type="match status" value="10"/>
</dbReference>
<dbReference type="FunFam" id="2.10.25.10:FF:000067">
    <property type="entry name" value="Laminin subunit gamma 1"/>
    <property type="match status" value="2"/>
</dbReference>
<dbReference type="FunFam" id="2.10.25.10:FF:000193">
    <property type="entry name" value="Laminin subunit gamma 1"/>
    <property type="match status" value="1"/>
</dbReference>
<dbReference type="FunFam" id="2.10.25.10:FF:000415">
    <property type="entry name" value="Laminin subunit gamma 1"/>
    <property type="match status" value="1"/>
</dbReference>
<dbReference type="FunFam" id="2.60.120.260:FF:000018">
    <property type="entry name" value="Laminin subunit gamma 1"/>
    <property type="match status" value="1"/>
</dbReference>
<dbReference type="FunFam" id="2.10.25.10:FF:000174">
    <property type="entry name" value="Laminin subunit gamma-1"/>
    <property type="match status" value="1"/>
</dbReference>
<dbReference type="FunFam" id="2.10.25.10:FF:001192">
    <property type="entry name" value="Laminin subunit gamma-1"/>
    <property type="match status" value="1"/>
</dbReference>
<dbReference type="FunFam" id="2.10.25.10:FF:000105">
    <property type="entry name" value="laminin subunit gamma-1"/>
    <property type="match status" value="1"/>
</dbReference>
<dbReference type="FunFam" id="2.10.25.10:FF:000163">
    <property type="entry name" value="laminin subunit gamma-1"/>
    <property type="match status" value="1"/>
</dbReference>
<dbReference type="FunFam" id="2.10.25.10:FF:000166">
    <property type="entry name" value="laminin subunit gamma-1"/>
    <property type="match status" value="1"/>
</dbReference>
<dbReference type="Gene3D" id="2.60.120.260">
    <property type="entry name" value="Galactose-binding domain-like"/>
    <property type="match status" value="1"/>
</dbReference>
<dbReference type="Gene3D" id="2.10.25.10">
    <property type="entry name" value="Laminin"/>
    <property type="match status" value="9"/>
</dbReference>
<dbReference type="InterPro" id="IPR000742">
    <property type="entry name" value="EGF-like_dom"/>
</dbReference>
<dbReference type="InterPro" id="IPR050440">
    <property type="entry name" value="Laminin/Netrin_ECM"/>
</dbReference>
<dbReference type="InterPro" id="IPR000034">
    <property type="entry name" value="Laminin_IV"/>
</dbReference>
<dbReference type="InterPro" id="IPR008211">
    <property type="entry name" value="Laminin_N"/>
</dbReference>
<dbReference type="InterPro" id="IPR002049">
    <property type="entry name" value="LE_dom"/>
</dbReference>
<dbReference type="InterPro" id="IPR056863">
    <property type="entry name" value="LMN_ATRN_NET-like_EGF"/>
</dbReference>
<dbReference type="PANTHER" id="PTHR10574:SF270">
    <property type="entry name" value="LAMININ SUBUNIT GAMMA-1"/>
    <property type="match status" value="1"/>
</dbReference>
<dbReference type="PANTHER" id="PTHR10574">
    <property type="entry name" value="NETRIN/LAMININ-RELATED"/>
    <property type="match status" value="1"/>
</dbReference>
<dbReference type="Pfam" id="PF00053">
    <property type="entry name" value="EGF_laminin"/>
    <property type="match status" value="8"/>
</dbReference>
<dbReference type="Pfam" id="PF24973">
    <property type="entry name" value="EGF_LMN_ATRN"/>
    <property type="match status" value="3"/>
</dbReference>
<dbReference type="Pfam" id="PF00052">
    <property type="entry name" value="Laminin_B"/>
    <property type="match status" value="1"/>
</dbReference>
<dbReference type="Pfam" id="PF00055">
    <property type="entry name" value="Laminin_N"/>
    <property type="match status" value="1"/>
</dbReference>
<dbReference type="PRINTS" id="PR00011">
    <property type="entry name" value="EGFLAMININ"/>
</dbReference>
<dbReference type="SMART" id="SM00181">
    <property type="entry name" value="EGF"/>
    <property type="match status" value="9"/>
</dbReference>
<dbReference type="SMART" id="SM00180">
    <property type="entry name" value="EGF_Lam"/>
    <property type="match status" value="10"/>
</dbReference>
<dbReference type="SMART" id="SM00281">
    <property type="entry name" value="LamB"/>
    <property type="match status" value="1"/>
</dbReference>
<dbReference type="SMART" id="SM00136">
    <property type="entry name" value="LamNT"/>
    <property type="match status" value="1"/>
</dbReference>
<dbReference type="SUPFAM" id="SSF57196">
    <property type="entry name" value="EGF/Laminin"/>
    <property type="match status" value="10"/>
</dbReference>
<dbReference type="PROSITE" id="PS00022">
    <property type="entry name" value="EGF_1"/>
    <property type="match status" value="8"/>
</dbReference>
<dbReference type="PROSITE" id="PS01186">
    <property type="entry name" value="EGF_2"/>
    <property type="match status" value="2"/>
</dbReference>
<dbReference type="PROSITE" id="PS01248">
    <property type="entry name" value="EGF_LAM_1"/>
    <property type="match status" value="10"/>
</dbReference>
<dbReference type="PROSITE" id="PS50027">
    <property type="entry name" value="EGF_LAM_2"/>
    <property type="match status" value="10"/>
</dbReference>
<dbReference type="PROSITE" id="PS51115">
    <property type="entry name" value="LAMININ_IVA"/>
    <property type="match status" value="1"/>
</dbReference>
<dbReference type="PROSITE" id="PS51117">
    <property type="entry name" value="LAMININ_NTER"/>
    <property type="match status" value="1"/>
</dbReference>
<name>LAMC1_MOUSE</name>